<protein>
    <recommendedName>
        <fullName evidence="1">Sec-independent protein translocase protein TatCt</fullName>
    </recommendedName>
</protein>
<reference key="1">
    <citation type="journal article" date="2010" name="PLoS ONE">
        <title>The complete genome sequence of Haloferax volcanii DS2, a model archaeon.</title>
        <authorList>
            <person name="Hartman A.L."/>
            <person name="Norais C."/>
            <person name="Badger J.H."/>
            <person name="Delmas S."/>
            <person name="Haldenby S."/>
            <person name="Madupu R."/>
            <person name="Robinson J."/>
            <person name="Khouri H."/>
            <person name="Ren Q."/>
            <person name="Lowe T.M."/>
            <person name="Maupin-Furlow J."/>
            <person name="Pohlschroder M."/>
            <person name="Daniels C."/>
            <person name="Pfeiffer F."/>
            <person name="Allers T."/>
            <person name="Eisen J.A."/>
        </authorList>
    </citation>
    <scope>NUCLEOTIDE SEQUENCE [LARGE SCALE GENOMIC DNA]</scope>
    <source>
        <strain>ATCC 29605 / DSM 3757 / JCM 8879 / NBRC 14742 / NCIMB 2012 / VKM B-1768 / DS2</strain>
    </source>
</reference>
<reference key="2">
    <citation type="journal article" date="2005" name="J. Bacteriol.">
        <title>Genetic and biochemical analysis of the twin-arginine translocation pathway in halophilic archaea.</title>
        <authorList>
            <person name="Dilks K."/>
            <person name="Gimenez M.I."/>
            <person name="Pohlschroder M."/>
        </authorList>
    </citation>
    <scope>FUNCTION</scope>
    <scope>SUBCELLULAR LOCATION</scope>
    <source>
        <strain>DS2 / DS70 / H99</strain>
    </source>
</reference>
<proteinExistence type="inferred from homology"/>
<dbReference type="EMBL" id="CP001956">
    <property type="protein sequence ID" value="ADE02320.1"/>
    <property type="molecule type" value="Genomic_DNA"/>
</dbReference>
<dbReference type="RefSeq" id="WP_004045299.1">
    <property type="nucleotide sequence ID" value="NC_013967.1"/>
</dbReference>
<dbReference type="SMR" id="D4GZC9"/>
<dbReference type="STRING" id="309800.HVO_0185"/>
<dbReference type="TCDB" id="2.A.64.1.7">
    <property type="family name" value="the twin arginine targeting (tat) family"/>
</dbReference>
<dbReference type="PaxDb" id="309800-C498_19179"/>
<dbReference type="EnsemblBacteria" id="ADE02320">
    <property type="protein sequence ID" value="ADE02320"/>
    <property type="gene ID" value="HVO_0185"/>
</dbReference>
<dbReference type="GeneID" id="8926452"/>
<dbReference type="KEGG" id="hvo:HVO_0185"/>
<dbReference type="eggNOG" id="arCOG04736">
    <property type="taxonomic scope" value="Archaea"/>
</dbReference>
<dbReference type="HOGENOM" id="CLU_359694_0_0_2"/>
<dbReference type="OrthoDB" id="15305at2157"/>
<dbReference type="Proteomes" id="UP000008243">
    <property type="component" value="Chromosome"/>
</dbReference>
<dbReference type="GO" id="GO:0033281">
    <property type="term" value="C:TAT protein transport complex"/>
    <property type="evidence" value="ECO:0007669"/>
    <property type="project" value="UniProtKB-UniRule"/>
</dbReference>
<dbReference type="GO" id="GO:0009977">
    <property type="term" value="F:proton motive force dependent protein transmembrane transporter activity"/>
    <property type="evidence" value="ECO:0007669"/>
    <property type="project" value="TreeGrafter"/>
</dbReference>
<dbReference type="GO" id="GO:0065002">
    <property type="term" value="P:intracellular protein transmembrane transport"/>
    <property type="evidence" value="ECO:0007669"/>
    <property type="project" value="TreeGrafter"/>
</dbReference>
<dbReference type="GO" id="GO:0043953">
    <property type="term" value="P:protein transport by the Tat complex"/>
    <property type="evidence" value="ECO:0007669"/>
    <property type="project" value="UniProtKB-UniRule"/>
</dbReference>
<dbReference type="HAMAP" id="MF_00902">
    <property type="entry name" value="TatC"/>
    <property type="match status" value="1"/>
</dbReference>
<dbReference type="InterPro" id="IPR002033">
    <property type="entry name" value="TatC"/>
</dbReference>
<dbReference type="PANTHER" id="PTHR30371">
    <property type="entry name" value="SEC-INDEPENDENT PROTEIN TRANSLOCASE PROTEIN TATC"/>
    <property type="match status" value="1"/>
</dbReference>
<dbReference type="PANTHER" id="PTHR30371:SF0">
    <property type="entry name" value="SEC-INDEPENDENT PROTEIN TRANSLOCASE PROTEIN TATC, CHLOROPLASTIC-RELATED"/>
    <property type="match status" value="1"/>
</dbReference>
<dbReference type="Pfam" id="PF00902">
    <property type="entry name" value="TatC"/>
    <property type="match status" value="2"/>
</dbReference>
<comment type="function">
    <text evidence="4">Part of the twin-arginine translocation (Tat) system that transports large folded proteins containing a characteristic twin-arginine motif in their signal peptide across membranes.</text>
</comment>
<comment type="subunit">
    <text evidence="1">Forms a complex with TatA.</text>
</comment>
<comment type="subcellular location">
    <subcellularLocation>
        <location evidence="1 3">Cell membrane</location>
        <topology evidence="1 3">Multi-pass membrane protein</topology>
    </subcellularLocation>
</comment>
<comment type="miscellaneous">
    <text evidence="4">H.volcanii possesses two TatC translocases: TatCo and TatCt. Both paralogs are structurally atypical and may represent adaptation to the extensive utilization of the Tat pathway in haloarchaea (PubMed:16291683).</text>
</comment>
<comment type="similarity">
    <text evidence="1">Belongs to the TatC family.</text>
</comment>
<accession>D4GZC9</accession>
<sequence length="718" mass="77986">MSSALDEDTQQTIAAGRETAGAMLRAAQKDLQKVFIVFLVGFLGTFYALRLYVWEFFRGVTKAQMDASVSGNVSIIAQTPFDVILLQAKIGLVVGVLFALPPFIYVSRGALKARDAWPKSPVAPWKLALIGLTMVALFAAGVAYGYFVFFPFTFAFLAQNAISAGFTPSYSIVKWAQFIFLLTLSFGLASQLPLAMTGLSYAEVVPYELFRDKWRHAIVGIFAFGALFTPPDPFTQIMWAVPVILLYAFSLYLARVVVTAKRGSEKIDVKSTATTHWNLLAGVGVVVGLLVYAFYEYGGVELANDGLAAIGSDYVFLAPGSGVALGAFVVAGGFVGLAFGLAYLVYRDIERLERTEIGVGDPTKLDLSALDVAGVRAAPPEAFADLEEDEVMALASAAIDDGDKAKAQALIDRFDEAEADREAEAADAEDEPGELEDRTTRAGGAFVSELTEGETDEDDIGGYYTDIAFIVDSLTSRAFWVVGWFMLVLATTFGWLYTGGIRDVYDDFLGRLPAAVRPEEVLNVVALHPMEALIFEVKFSTILAVLATLPLVAYFVWPALRERNIIRKRRRTVFVWTGALAGGLLGGFALGYTYVAPTVITFLVEDALAANMIITYRITNFFWLIFFTTAGIGLLADVPILMVLLNTAGISYRMMRNRWREVTVFILAISAVFTPASITTMFMVTLPLMAAYGVGLGVLFVLTVGGRRDLSPARGAAE</sequence>
<gene>
    <name evidence="1" type="primary">tatCt</name>
    <name type="ordered locus">HVO_0185</name>
</gene>
<name>TATCT_HALVD</name>
<organism>
    <name type="scientific">Haloferax volcanii (strain ATCC 29605 / DSM 3757 / JCM 8879 / NBRC 14742 / NCIMB 2012 / VKM B-1768 / DS2)</name>
    <name type="common">Halobacterium volcanii</name>
    <dbReference type="NCBI Taxonomy" id="309800"/>
    <lineage>
        <taxon>Archaea</taxon>
        <taxon>Methanobacteriati</taxon>
        <taxon>Methanobacteriota</taxon>
        <taxon>Stenosarchaea group</taxon>
        <taxon>Halobacteria</taxon>
        <taxon>Halobacteriales</taxon>
        <taxon>Haloferacaceae</taxon>
        <taxon>Haloferax</taxon>
    </lineage>
</organism>
<evidence type="ECO:0000255" key="1">
    <source>
        <dbReference type="HAMAP-Rule" id="MF_00902"/>
    </source>
</evidence>
<evidence type="ECO:0000256" key="2">
    <source>
        <dbReference type="SAM" id="MobiDB-lite"/>
    </source>
</evidence>
<evidence type="ECO:0000269" key="3">
    <source>
    </source>
</evidence>
<evidence type="ECO:0000305" key="4">
    <source>
    </source>
</evidence>
<feature type="chain" id="PRO_0000417361" description="Sec-independent protein translocase protein TatCt">
    <location>
        <begin position="1"/>
        <end position="718"/>
    </location>
</feature>
<feature type="transmembrane region" description="Helical" evidence="1">
    <location>
        <begin position="34"/>
        <end position="54"/>
    </location>
</feature>
<feature type="transmembrane region" description="Helical" evidence="1">
    <location>
        <begin position="84"/>
        <end position="104"/>
    </location>
</feature>
<feature type="transmembrane region" description="Helical" evidence="1">
    <location>
        <begin position="137"/>
        <end position="157"/>
    </location>
</feature>
<feature type="transmembrane region" description="Helical" evidence="1">
    <location>
        <begin position="178"/>
        <end position="198"/>
    </location>
</feature>
<feature type="transmembrane region" description="Helical" evidence="1">
    <location>
        <begin position="214"/>
        <end position="231"/>
    </location>
</feature>
<feature type="transmembrane region" description="Helical" evidence="1">
    <location>
        <begin position="234"/>
        <end position="254"/>
    </location>
</feature>
<feature type="transmembrane region" description="Helical" evidence="1">
    <location>
        <begin position="280"/>
        <end position="300"/>
    </location>
</feature>
<feature type="transmembrane region" description="Helical" evidence="1">
    <location>
        <begin position="325"/>
        <end position="345"/>
    </location>
</feature>
<feature type="transmembrane region" description="Helical" evidence="1">
    <location>
        <begin position="478"/>
        <end position="498"/>
    </location>
</feature>
<feature type="transmembrane region" description="Helical" evidence="1">
    <location>
        <begin position="539"/>
        <end position="559"/>
    </location>
</feature>
<feature type="transmembrane region" description="Helical" evidence="1">
    <location>
        <begin position="572"/>
        <end position="592"/>
    </location>
</feature>
<feature type="transmembrane region" description="Helical" evidence="1">
    <location>
        <begin position="621"/>
        <end position="641"/>
    </location>
</feature>
<feature type="transmembrane region" description="Helical" evidence="1">
    <location>
        <begin position="661"/>
        <end position="681"/>
    </location>
</feature>
<feature type="transmembrane region" description="Helical" evidence="1">
    <location>
        <begin position="682"/>
        <end position="702"/>
    </location>
</feature>
<feature type="region of interest" description="Disordered" evidence="2">
    <location>
        <begin position="421"/>
        <end position="451"/>
    </location>
</feature>
<feature type="compositionally biased region" description="Acidic residues" evidence="2">
    <location>
        <begin position="425"/>
        <end position="434"/>
    </location>
</feature>
<keyword id="KW-1003">Cell membrane</keyword>
<keyword id="KW-0472">Membrane</keyword>
<keyword id="KW-0653">Protein transport</keyword>
<keyword id="KW-1185">Reference proteome</keyword>
<keyword id="KW-0811">Translocation</keyword>
<keyword id="KW-0812">Transmembrane</keyword>
<keyword id="KW-1133">Transmembrane helix</keyword>
<keyword id="KW-0813">Transport</keyword>